<keyword id="KW-0997">Cell inner membrane</keyword>
<keyword id="KW-1003">Cell membrane</keyword>
<keyword id="KW-0472">Membrane</keyword>
<keyword id="KW-0520">NAD</keyword>
<keyword id="KW-0874">Quinone</keyword>
<keyword id="KW-1185">Reference proteome</keyword>
<keyword id="KW-1278">Translocase</keyword>
<keyword id="KW-0813">Transport</keyword>
<keyword id="KW-0830">Ubiquinone</keyword>
<sequence length="197" mass="23007">MASIQDLYETVSRVLGNQAGKVISALGEITVECLPEHYISVMTALRDHEELHFELLVDLCGVDYSTYKNEAWQGKRFAVVSQLLSVKNNQRIRVRVWVSDDDFPVVESVVDIYNSADWYEREAFDMYGIMFNNHPDLRRILTDYGFVGHPFRKDFPISGYVEMRYDEEQKRVIYQPVTIEPREITPRIVREENYGGQ</sequence>
<proteinExistence type="inferred from homology"/>
<feature type="chain" id="PRO_0000118673" description="NADH-quinone oxidoreductase subunit C">
    <location>
        <begin position="1"/>
        <end position="197"/>
    </location>
</feature>
<organism>
    <name type="scientific">Neisseria meningitidis serogroup B (strain ATCC BAA-335 / MC58)</name>
    <dbReference type="NCBI Taxonomy" id="122586"/>
    <lineage>
        <taxon>Bacteria</taxon>
        <taxon>Pseudomonadati</taxon>
        <taxon>Pseudomonadota</taxon>
        <taxon>Betaproteobacteria</taxon>
        <taxon>Neisseriales</taxon>
        <taxon>Neisseriaceae</taxon>
        <taxon>Neisseria</taxon>
    </lineage>
</organism>
<gene>
    <name evidence="1" type="primary">nuoC</name>
    <name type="ordered locus">NMB0243</name>
</gene>
<accession>Q9K1C1</accession>
<reference key="1">
    <citation type="journal article" date="2000" name="Science">
        <title>Complete genome sequence of Neisseria meningitidis serogroup B strain MC58.</title>
        <authorList>
            <person name="Tettelin H."/>
            <person name="Saunders N.J."/>
            <person name="Heidelberg J.F."/>
            <person name="Jeffries A.C."/>
            <person name="Nelson K.E."/>
            <person name="Eisen J.A."/>
            <person name="Ketchum K.A."/>
            <person name="Hood D.W."/>
            <person name="Peden J.F."/>
            <person name="Dodson R.J."/>
            <person name="Nelson W.C."/>
            <person name="Gwinn M.L."/>
            <person name="DeBoy R.T."/>
            <person name="Peterson J.D."/>
            <person name="Hickey E.K."/>
            <person name="Haft D.H."/>
            <person name="Salzberg S.L."/>
            <person name="White O."/>
            <person name="Fleischmann R.D."/>
            <person name="Dougherty B.A."/>
            <person name="Mason T.M."/>
            <person name="Ciecko A."/>
            <person name="Parksey D.S."/>
            <person name="Blair E."/>
            <person name="Cittone H."/>
            <person name="Clark E.B."/>
            <person name="Cotton M.D."/>
            <person name="Utterback T.R."/>
            <person name="Khouri H.M."/>
            <person name="Qin H."/>
            <person name="Vamathevan J.J."/>
            <person name="Gill J."/>
            <person name="Scarlato V."/>
            <person name="Masignani V."/>
            <person name="Pizza M."/>
            <person name="Grandi G."/>
            <person name="Sun L."/>
            <person name="Smith H.O."/>
            <person name="Fraser C.M."/>
            <person name="Moxon E.R."/>
            <person name="Rappuoli R."/>
            <person name="Venter J.C."/>
        </authorList>
    </citation>
    <scope>NUCLEOTIDE SEQUENCE [LARGE SCALE GENOMIC DNA]</scope>
    <source>
        <strain>ATCC BAA-335 / MC58</strain>
    </source>
</reference>
<evidence type="ECO:0000255" key="1">
    <source>
        <dbReference type="HAMAP-Rule" id="MF_01357"/>
    </source>
</evidence>
<name>NUOC_NEIMB</name>
<dbReference type="EC" id="7.1.1.-" evidence="1"/>
<dbReference type="EMBL" id="AE002098">
    <property type="protein sequence ID" value="AAF40697.1"/>
    <property type="molecule type" value="Genomic_DNA"/>
</dbReference>
<dbReference type="PIR" id="A81222">
    <property type="entry name" value="A81222"/>
</dbReference>
<dbReference type="RefSeq" id="NP_273299.1">
    <property type="nucleotide sequence ID" value="NC_003112.2"/>
</dbReference>
<dbReference type="RefSeq" id="WP_002224826.1">
    <property type="nucleotide sequence ID" value="NC_003112.2"/>
</dbReference>
<dbReference type="SMR" id="Q9K1C1"/>
<dbReference type="STRING" id="122586.NMB0243"/>
<dbReference type="PaxDb" id="122586-NMB0243"/>
<dbReference type="KEGG" id="nme:NMB0243"/>
<dbReference type="PATRIC" id="fig|122586.8.peg.305"/>
<dbReference type="HOGENOM" id="CLU_042628_2_1_4"/>
<dbReference type="InParanoid" id="Q9K1C1"/>
<dbReference type="OrthoDB" id="9803286at2"/>
<dbReference type="Proteomes" id="UP000000425">
    <property type="component" value="Chromosome"/>
</dbReference>
<dbReference type="GO" id="GO:0005886">
    <property type="term" value="C:plasma membrane"/>
    <property type="evidence" value="ECO:0007669"/>
    <property type="project" value="UniProtKB-SubCell"/>
</dbReference>
<dbReference type="GO" id="GO:0008137">
    <property type="term" value="F:NADH dehydrogenase (ubiquinone) activity"/>
    <property type="evidence" value="ECO:0007669"/>
    <property type="project" value="InterPro"/>
</dbReference>
<dbReference type="GO" id="GO:0050136">
    <property type="term" value="F:NADH:ubiquinone reductase (non-electrogenic) activity"/>
    <property type="evidence" value="ECO:0007669"/>
    <property type="project" value="UniProtKB-UniRule"/>
</dbReference>
<dbReference type="GO" id="GO:0048038">
    <property type="term" value="F:quinone binding"/>
    <property type="evidence" value="ECO:0007669"/>
    <property type="project" value="UniProtKB-KW"/>
</dbReference>
<dbReference type="Gene3D" id="3.30.460.80">
    <property type="entry name" value="NADH:ubiquinone oxidoreductase, 30kDa subunit"/>
    <property type="match status" value="1"/>
</dbReference>
<dbReference type="HAMAP" id="MF_01357">
    <property type="entry name" value="NDH1_NuoC"/>
    <property type="match status" value="1"/>
</dbReference>
<dbReference type="InterPro" id="IPR010218">
    <property type="entry name" value="NADH_DH_suC"/>
</dbReference>
<dbReference type="InterPro" id="IPR037232">
    <property type="entry name" value="NADH_quin_OxRdtase_su_C/D-like"/>
</dbReference>
<dbReference type="InterPro" id="IPR001268">
    <property type="entry name" value="NADH_UbQ_OxRdtase_30kDa_su"/>
</dbReference>
<dbReference type="InterPro" id="IPR020396">
    <property type="entry name" value="NADH_UbQ_OxRdtase_CS"/>
</dbReference>
<dbReference type="NCBIfam" id="TIGR01961">
    <property type="entry name" value="NuoC_fam"/>
    <property type="match status" value="1"/>
</dbReference>
<dbReference type="NCBIfam" id="NF004730">
    <property type="entry name" value="PRK06074.1-1"/>
    <property type="match status" value="1"/>
</dbReference>
<dbReference type="PANTHER" id="PTHR10884:SF14">
    <property type="entry name" value="NADH DEHYDROGENASE [UBIQUINONE] IRON-SULFUR PROTEIN 3, MITOCHONDRIAL"/>
    <property type="match status" value="1"/>
</dbReference>
<dbReference type="PANTHER" id="PTHR10884">
    <property type="entry name" value="NADH DEHYDROGENASE UBIQUINONE IRON-SULFUR PROTEIN 3"/>
    <property type="match status" value="1"/>
</dbReference>
<dbReference type="Pfam" id="PF00329">
    <property type="entry name" value="Complex1_30kDa"/>
    <property type="match status" value="1"/>
</dbReference>
<dbReference type="SUPFAM" id="SSF143243">
    <property type="entry name" value="Nqo5-like"/>
    <property type="match status" value="1"/>
</dbReference>
<dbReference type="PROSITE" id="PS00542">
    <property type="entry name" value="COMPLEX1_30K"/>
    <property type="match status" value="1"/>
</dbReference>
<protein>
    <recommendedName>
        <fullName evidence="1">NADH-quinone oxidoreductase subunit C</fullName>
        <ecNumber evidence="1">7.1.1.-</ecNumber>
    </recommendedName>
    <alternativeName>
        <fullName evidence="1">NADH dehydrogenase I subunit C</fullName>
    </alternativeName>
    <alternativeName>
        <fullName evidence="1">NDH-1 subunit C</fullName>
    </alternativeName>
</protein>
<comment type="function">
    <text evidence="1">NDH-1 shuttles electrons from NADH, via FMN and iron-sulfur (Fe-S) centers, to quinones in the respiratory chain. The immediate electron acceptor for the enzyme in this species is believed to be ubiquinone. Couples the redox reaction to proton translocation (for every two electrons transferred, four hydrogen ions are translocated across the cytoplasmic membrane), and thus conserves the redox energy in a proton gradient.</text>
</comment>
<comment type="catalytic activity">
    <reaction evidence="1">
        <text>a quinone + NADH + 5 H(+)(in) = a quinol + NAD(+) + 4 H(+)(out)</text>
        <dbReference type="Rhea" id="RHEA:57888"/>
        <dbReference type="ChEBI" id="CHEBI:15378"/>
        <dbReference type="ChEBI" id="CHEBI:24646"/>
        <dbReference type="ChEBI" id="CHEBI:57540"/>
        <dbReference type="ChEBI" id="CHEBI:57945"/>
        <dbReference type="ChEBI" id="CHEBI:132124"/>
    </reaction>
</comment>
<comment type="subunit">
    <text evidence="1">NDH-1 is composed of 14 different subunits. Subunits NuoB, C, D, E, F, and G constitute the peripheral sector of the complex.</text>
</comment>
<comment type="subcellular location">
    <subcellularLocation>
        <location evidence="1">Cell inner membrane</location>
        <topology evidence="1">Peripheral membrane protein</topology>
        <orientation evidence="1">Cytoplasmic side</orientation>
    </subcellularLocation>
</comment>
<comment type="similarity">
    <text evidence="1">Belongs to the complex I 30 kDa subunit family.</text>
</comment>